<sequence length="469" mass="52016">MKTLILTLLSLYELQLCCGAYNQNIRSQRKFEMIKTEISSYKDVAKSIIDLAVHGKAQNRSYERLALFVDTVGNRMSGSENLKTAIAYMYKSLQEDDLDRVYLEPVKVPHWERGEESAMLLEPRKKSLAILGLGGSIGTPVEGISAEVIVVSSFAELHNRSKEAKGKIVVYNEPFVNYGETVRYRGSGAVEAAKVGAVASLIRSVTPLSVYSPHTGWQWYENDVPKIPTASITVEDAEMLSRMASRGLKIVIQLKMGAVNHPDADSYNTVAEIVGSKYPEQVVIVSGHLDSWDVGQGAMDDGGGAFISWEALSLIKDLGLRPKRTLRLVLWTGEEQGGVGASQYYELHKKNISNIDLVMESDIGTFMPLGMQFTGKPEARAIMTEVMQLLQPINITSLYDYAEGTDINSWMQAGVPGASLFDDISKYFWFHHSQGDTMTVQDPVWMNLCAAVWTVVSYVVADMEEMLPR</sequence>
<feature type="signal peptide" evidence="2">
    <location>
        <begin position="1"/>
        <end position="19"/>
    </location>
</feature>
<feature type="propeptide" id="PRO_0000312266" evidence="1">
    <location>
        <begin position="20"/>
        <end position="42"/>
    </location>
</feature>
<feature type="chain" id="PRO_0000312267" description="Carboxypeptidase Q">
    <location>
        <begin position="43"/>
        <end position="469"/>
    </location>
</feature>
<feature type="active site" description="Nucleophile" evidence="1">
    <location>
        <position position="334"/>
    </location>
</feature>
<feature type="binding site" evidence="1">
    <location>
        <position position="288"/>
    </location>
    <ligand>
        <name>Zn(2+)</name>
        <dbReference type="ChEBI" id="CHEBI:29105"/>
        <label>1</label>
    </ligand>
</feature>
<feature type="binding site" evidence="1">
    <location>
        <position position="300"/>
    </location>
    <ligand>
        <name>Zn(2+)</name>
        <dbReference type="ChEBI" id="CHEBI:29105"/>
        <label>1</label>
    </ligand>
</feature>
<feature type="binding site" evidence="1">
    <location>
        <position position="300"/>
    </location>
    <ligand>
        <name>Zn(2+)</name>
        <dbReference type="ChEBI" id="CHEBI:29105"/>
        <label>2</label>
        <note>catalytic</note>
    </ligand>
</feature>
<feature type="binding site" evidence="1">
    <location>
        <position position="335"/>
    </location>
    <ligand>
        <name>Zn(2+)</name>
        <dbReference type="ChEBI" id="CHEBI:29105"/>
        <label>2</label>
        <note>catalytic</note>
    </ligand>
</feature>
<feature type="binding site" evidence="1">
    <location>
        <position position="362"/>
    </location>
    <ligand>
        <name>Zn(2+)</name>
        <dbReference type="ChEBI" id="CHEBI:29105"/>
        <label>1</label>
    </ligand>
</feature>
<feature type="binding site" evidence="1">
    <location>
        <position position="432"/>
    </location>
    <ligand>
        <name>Zn(2+)</name>
        <dbReference type="ChEBI" id="CHEBI:29105"/>
        <label>2</label>
        <note>catalytic</note>
    </ligand>
</feature>
<feature type="glycosylation site" description="N-linked (GlcNAc...) asparagine" evidence="2">
    <location>
        <position position="59"/>
    </location>
</feature>
<feature type="glycosylation site" description="N-linked (GlcNAc...) asparagine" evidence="2">
    <location>
        <position position="159"/>
    </location>
</feature>
<feature type="glycosylation site" description="N-linked (GlcNAc...) asparagine" evidence="2">
    <location>
        <position position="351"/>
    </location>
</feature>
<feature type="glycosylation site" description="N-linked (GlcNAc...) asparagine" evidence="2">
    <location>
        <position position="394"/>
    </location>
</feature>
<accession>Q6GQ29</accession>
<evidence type="ECO:0000250" key="1"/>
<evidence type="ECO:0000255" key="2"/>
<evidence type="ECO:0000305" key="3"/>
<protein>
    <recommendedName>
        <fullName>Carboxypeptidase Q</fullName>
        <ecNumber>3.4.17.-</ecNumber>
    </recommendedName>
    <alternativeName>
        <fullName>Plasma glutamate carboxypeptidase</fullName>
    </alternativeName>
</protein>
<dbReference type="EC" id="3.4.17.-"/>
<dbReference type="EMBL" id="BC072919">
    <property type="protein sequence ID" value="AAH72919.1"/>
    <property type="molecule type" value="mRNA"/>
</dbReference>
<dbReference type="RefSeq" id="NP_001085551.1">
    <property type="nucleotide sequence ID" value="NM_001092082.1"/>
</dbReference>
<dbReference type="SMR" id="Q6GQ29"/>
<dbReference type="MEROPS" id="M28.014"/>
<dbReference type="GlyCosmos" id="Q6GQ29">
    <property type="glycosylation" value="4 sites, No reported glycans"/>
</dbReference>
<dbReference type="GeneID" id="443977"/>
<dbReference type="KEGG" id="xla:443977"/>
<dbReference type="AGR" id="Xenbase:XB-GENE-5761579"/>
<dbReference type="CTD" id="443977"/>
<dbReference type="Xenbase" id="XB-GENE-5761579">
    <property type="gene designation" value="cpq.L"/>
</dbReference>
<dbReference type="OrthoDB" id="10013407at2759"/>
<dbReference type="Proteomes" id="UP000186698">
    <property type="component" value="Chromosome 6L"/>
</dbReference>
<dbReference type="Bgee" id="443977">
    <property type="expression patterns" value="Expressed in internal ear and 19 other cell types or tissues"/>
</dbReference>
<dbReference type="GO" id="GO:0005737">
    <property type="term" value="C:cytoplasm"/>
    <property type="evidence" value="ECO:0000250"/>
    <property type="project" value="UniProtKB"/>
</dbReference>
<dbReference type="GO" id="GO:0005783">
    <property type="term" value="C:endoplasmic reticulum"/>
    <property type="evidence" value="ECO:0000250"/>
    <property type="project" value="UniProtKB"/>
</dbReference>
<dbReference type="GO" id="GO:0005615">
    <property type="term" value="C:extracellular space"/>
    <property type="evidence" value="ECO:0000250"/>
    <property type="project" value="UniProtKB"/>
</dbReference>
<dbReference type="GO" id="GO:0005794">
    <property type="term" value="C:Golgi apparatus"/>
    <property type="evidence" value="ECO:0000250"/>
    <property type="project" value="UniProtKB"/>
</dbReference>
<dbReference type="GO" id="GO:0005764">
    <property type="term" value="C:lysosome"/>
    <property type="evidence" value="ECO:0000250"/>
    <property type="project" value="UniProtKB"/>
</dbReference>
<dbReference type="GO" id="GO:0004180">
    <property type="term" value="F:carboxypeptidase activity"/>
    <property type="evidence" value="ECO:0007669"/>
    <property type="project" value="UniProtKB-KW"/>
</dbReference>
<dbReference type="GO" id="GO:0046872">
    <property type="term" value="F:metal ion binding"/>
    <property type="evidence" value="ECO:0007669"/>
    <property type="project" value="UniProtKB-KW"/>
</dbReference>
<dbReference type="GO" id="GO:0070573">
    <property type="term" value="F:metallodipeptidase activity"/>
    <property type="evidence" value="ECO:0000250"/>
    <property type="project" value="UniProtKB"/>
</dbReference>
<dbReference type="GO" id="GO:0042803">
    <property type="term" value="F:protein homodimerization activity"/>
    <property type="evidence" value="ECO:0000250"/>
    <property type="project" value="UniProtKB"/>
</dbReference>
<dbReference type="GO" id="GO:0043171">
    <property type="term" value="P:peptide catabolic process"/>
    <property type="evidence" value="ECO:0000250"/>
    <property type="project" value="UniProtKB"/>
</dbReference>
<dbReference type="GO" id="GO:0006508">
    <property type="term" value="P:proteolysis"/>
    <property type="evidence" value="ECO:0000250"/>
    <property type="project" value="UniProtKB"/>
</dbReference>
<dbReference type="CDD" id="cd03883">
    <property type="entry name" value="M28_Pgcp_like"/>
    <property type="match status" value="1"/>
</dbReference>
<dbReference type="FunFam" id="3.40.630.10:FF:000036">
    <property type="entry name" value="Carboxypeptidase Q"/>
    <property type="match status" value="1"/>
</dbReference>
<dbReference type="FunFam" id="3.50.30.30:FF:000009">
    <property type="entry name" value="Carboxypeptidase Q"/>
    <property type="match status" value="1"/>
</dbReference>
<dbReference type="Gene3D" id="3.50.30.30">
    <property type="match status" value="1"/>
</dbReference>
<dbReference type="Gene3D" id="3.40.630.10">
    <property type="entry name" value="Zn peptidases"/>
    <property type="match status" value="1"/>
</dbReference>
<dbReference type="InterPro" id="IPR039866">
    <property type="entry name" value="CPQ"/>
</dbReference>
<dbReference type="InterPro" id="IPR007484">
    <property type="entry name" value="Peptidase_M28"/>
</dbReference>
<dbReference type="PANTHER" id="PTHR12053:SF3">
    <property type="entry name" value="CARBOXYPEPTIDASE Q"/>
    <property type="match status" value="1"/>
</dbReference>
<dbReference type="PANTHER" id="PTHR12053">
    <property type="entry name" value="PROTEASE FAMILY M28 PLASMA GLUTAMATE CARBOXYPEPTIDASE-RELATED"/>
    <property type="match status" value="1"/>
</dbReference>
<dbReference type="Pfam" id="PF04389">
    <property type="entry name" value="Peptidase_M28"/>
    <property type="match status" value="1"/>
</dbReference>
<dbReference type="SUPFAM" id="SSF53187">
    <property type="entry name" value="Zn-dependent exopeptidases"/>
    <property type="match status" value="1"/>
</dbReference>
<gene>
    <name type="primary">cpq</name>
    <name type="synonym">pgcp</name>
</gene>
<organism>
    <name type="scientific">Xenopus laevis</name>
    <name type="common">African clawed frog</name>
    <dbReference type="NCBI Taxonomy" id="8355"/>
    <lineage>
        <taxon>Eukaryota</taxon>
        <taxon>Metazoa</taxon>
        <taxon>Chordata</taxon>
        <taxon>Craniata</taxon>
        <taxon>Vertebrata</taxon>
        <taxon>Euteleostomi</taxon>
        <taxon>Amphibia</taxon>
        <taxon>Batrachia</taxon>
        <taxon>Anura</taxon>
        <taxon>Pipoidea</taxon>
        <taxon>Pipidae</taxon>
        <taxon>Xenopodinae</taxon>
        <taxon>Xenopus</taxon>
        <taxon>Xenopus</taxon>
    </lineage>
</organism>
<proteinExistence type="evidence at transcript level"/>
<comment type="function">
    <text evidence="1">Carboxypeptidase that may play an important role in the hydrolysis of circulating peptides. Catalyzes more efficiently the hydrolysis of dipeptides with unsubstituted terminals into amino acids (By similarity).</text>
</comment>
<comment type="subunit">
    <text evidence="1">Homodimer. The monomeric form is inactive while the homodimer is active (By similarity).</text>
</comment>
<comment type="subcellular location">
    <subcellularLocation>
        <location evidence="1">Endoplasmic reticulum</location>
    </subcellularLocation>
    <subcellularLocation>
        <location evidence="1">Golgi apparatus</location>
    </subcellularLocation>
    <subcellularLocation>
        <location evidence="1">Lysosome</location>
    </subcellularLocation>
    <subcellularLocation>
        <location evidence="1">Secreted</location>
    </subcellularLocation>
</comment>
<comment type="similarity">
    <text evidence="3">Belongs to the peptidase M28 family.</text>
</comment>
<reference key="1">
    <citation type="submission" date="2004-06" db="EMBL/GenBank/DDBJ databases">
        <authorList>
            <consortium name="NIH - Xenopus Gene Collection (XGC) project"/>
        </authorList>
    </citation>
    <scope>NUCLEOTIDE SEQUENCE [LARGE SCALE MRNA]</scope>
    <source>
        <tissue>Liver</tissue>
    </source>
</reference>
<name>CBPQ_XENLA</name>
<keyword id="KW-0121">Carboxypeptidase</keyword>
<keyword id="KW-0256">Endoplasmic reticulum</keyword>
<keyword id="KW-0325">Glycoprotein</keyword>
<keyword id="KW-0333">Golgi apparatus</keyword>
<keyword id="KW-0378">Hydrolase</keyword>
<keyword id="KW-0458">Lysosome</keyword>
<keyword id="KW-0479">Metal-binding</keyword>
<keyword id="KW-0482">Metalloprotease</keyword>
<keyword id="KW-0645">Protease</keyword>
<keyword id="KW-1185">Reference proteome</keyword>
<keyword id="KW-0964">Secreted</keyword>
<keyword id="KW-0732">Signal</keyword>
<keyword id="KW-0862">Zinc</keyword>
<keyword id="KW-0865">Zymogen</keyword>